<proteinExistence type="evidence at protein level"/>
<name>Y1186_STAAN</name>
<organism>
    <name type="scientific">Staphylococcus aureus (strain N315)</name>
    <dbReference type="NCBI Taxonomy" id="158879"/>
    <lineage>
        <taxon>Bacteria</taxon>
        <taxon>Bacillati</taxon>
        <taxon>Bacillota</taxon>
        <taxon>Bacilli</taxon>
        <taxon>Bacillales</taxon>
        <taxon>Staphylococcaceae</taxon>
        <taxon>Staphylococcus</taxon>
    </lineage>
</organism>
<feature type="chain" id="PRO_0000300085" description="Uncharacterized protein SA1186">
    <location>
        <begin position="1"/>
        <end position="98"/>
    </location>
</feature>
<sequence length="98" mass="11496">MQIELTDAAVTWFKNELELPENNKVLVFFVRYGGEFQLKQGFSPAFTVEPKEDVDIGYEQQYDDLNVVVAEKDLWYFEDDHIIVNVVDHEDEISYSTK</sequence>
<reference key="1">
    <citation type="journal article" date="2001" name="Lancet">
        <title>Whole genome sequencing of meticillin-resistant Staphylococcus aureus.</title>
        <authorList>
            <person name="Kuroda M."/>
            <person name="Ohta T."/>
            <person name="Uchiyama I."/>
            <person name="Baba T."/>
            <person name="Yuzawa H."/>
            <person name="Kobayashi I."/>
            <person name="Cui L."/>
            <person name="Oguchi A."/>
            <person name="Aoki K."/>
            <person name="Nagai Y."/>
            <person name="Lian J.-Q."/>
            <person name="Ito T."/>
            <person name="Kanamori M."/>
            <person name="Matsumaru H."/>
            <person name="Maruyama A."/>
            <person name="Murakami H."/>
            <person name="Hosoyama A."/>
            <person name="Mizutani-Ui Y."/>
            <person name="Takahashi N.K."/>
            <person name="Sawano T."/>
            <person name="Inoue R."/>
            <person name="Kaito C."/>
            <person name="Sekimizu K."/>
            <person name="Hirakawa H."/>
            <person name="Kuhara S."/>
            <person name="Goto S."/>
            <person name="Yabuzaki J."/>
            <person name="Kanehisa M."/>
            <person name="Yamashita A."/>
            <person name="Oshima K."/>
            <person name="Furuya K."/>
            <person name="Yoshino C."/>
            <person name="Shiba T."/>
            <person name="Hattori M."/>
            <person name="Ogasawara N."/>
            <person name="Hayashi H."/>
            <person name="Hiramatsu K."/>
        </authorList>
    </citation>
    <scope>NUCLEOTIDE SEQUENCE [LARGE SCALE GENOMIC DNA]</scope>
    <source>
        <strain>N315</strain>
    </source>
</reference>
<reference key="2">
    <citation type="submission" date="2007-10" db="UniProtKB">
        <title>Shotgun proteomic analysis of total and membrane protein extracts of S. aureus strain N315.</title>
        <authorList>
            <person name="Vaezzadeh A.R."/>
            <person name="Deshusses J."/>
            <person name="Lescuyer P."/>
            <person name="Hochstrasser D.F."/>
        </authorList>
    </citation>
    <scope>IDENTIFICATION BY MASS SPECTROMETRY [LARGE SCALE ANALYSIS]</scope>
    <source>
        <strain>N315</strain>
    </source>
</reference>
<dbReference type="EMBL" id="BA000018">
    <property type="protein sequence ID" value="BAB42444.1"/>
    <property type="molecule type" value="Genomic_DNA"/>
</dbReference>
<dbReference type="PIR" id="H89910">
    <property type="entry name" value="H89910"/>
</dbReference>
<dbReference type="RefSeq" id="WP_001165377.1">
    <property type="nucleotide sequence ID" value="NC_002745.2"/>
</dbReference>
<dbReference type="SMR" id="Q7A5S4"/>
<dbReference type="EnsemblBacteria" id="BAB42444">
    <property type="protein sequence ID" value="BAB42444"/>
    <property type="gene ID" value="BAB42444"/>
</dbReference>
<dbReference type="KEGG" id="sau:SA1186"/>
<dbReference type="HOGENOM" id="CLU_163967_0_0_9"/>
<dbReference type="InterPro" id="IPR035903">
    <property type="entry name" value="HesB-like_dom_sf"/>
</dbReference>
<dbReference type="InterPro" id="IPR008326">
    <property type="entry name" value="PdhI-like"/>
</dbReference>
<dbReference type="PIRSF" id="PIRSF034852">
    <property type="entry name" value="UCP034852"/>
    <property type="match status" value="1"/>
</dbReference>
<dbReference type="SUPFAM" id="SSF89360">
    <property type="entry name" value="HesB-like domain"/>
    <property type="match status" value="1"/>
</dbReference>
<comment type="similarity">
    <text evidence="1">Belongs to the HesB/IscA family.</text>
</comment>
<evidence type="ECO:0000305" key="1"/>
<protein>
    <recommendedName>
        <fullName>Uncharacterized protein SA1186</fullName>
    </recommendedName>
</protein>
<accession>Q7A5S4</accession>
<gene>
    <name type="ordered locus">SA1186</name>
</gene>